<organism>
    <name type="scientific">Daucus carota</name>
    <name type="common">Wild carrot</name>
    <dbReference type="NCBI Taxonomy" id="4039"/>
    <lineage>
        <taxon>Eukaryota</taxon>
        <taxon>Viridiplantae</taxon>
        <taxon>Streptophyta</taxon>
        <taxon>Embryophyta</taxon>
        <taxon>Tracheophyta</taxon>
        <taxon>Spermatophyta</taxon>
        <taxon>Magnoliopsida</taxon>
        <taxon>eudicotyledons</taxon>
        <taxon>Gunneridae</taxon>
        <taxon>Pentapetalae</taxon>
        <taxon>asterids</taxon>
        <taxon>campanulids</taxon>
        <taxon>Apiales</taxon>
        <taxon>Apiaceae</taxon>
        <taxon>Apioideae</taxon>
        <taxon>Scandiceae</taxon>
        <taxon>Daucinae</taxon>
        <taxon>Daucus</taxon>
        <taxon>Daucus sect. Daucus</taxon>
    </lineage>
</organism>
<comment type="function">
    <text>Actins are highly conserved proteins that are involved in various types of cell motility and are ubiquitously expressed in all eukaryotic cells.</text>
</comment>
<comment type="function">
    <text>Essential component of cell cytoskeleton; plays an important role in cytoplasmic streaming, cell shape determination, cell division, organelle movement and extension growth.</text>
</comment>
<comment type="catalytic activity">
    <reaction evidence="1">
        <text>ATP + H2O = ADP + phosphate + H(+)</text>
        <dbReference type="Rhea" id="RHEA:13065"/>
        <dbReference type="ChEBI" id="CHEBI:15377"/>
        <dbReference type="ChEBI" id="CHEBI:15378"/>
        <dbReference type="ChEBI" id="CHEBI:30616"/>
        <dbReference type="ChEBI" id="CHEBI:43474"/>
        <dbReference type="ChEBI" id="CHEBI:456216"/>
    </reaction>
</comment>
<comment type="subcellular location">
    <subcellularLocation>
        <location>Cytoplasm</location>
        <location>Cytoskeleton</location>
    </subcellularLocation>
</comment>
<comment type="similarity">
    <text evidence="2">Belongs to the actin family.</text>
</comment>
<sequence>MADGEDIQPLVCDNGTGMVKAGFAGDDAPRAVFPSIVGRPRHTGVMVGMGQKDAYVGDEAQSKRGIITLKYPIEHGIVSNWDDMRIWHHTFYNELRASPEEHPVLLTEAPLNPKANREKMTQIMIETFNVPAMYVAIQAVLSLYASGRTTGIVLDSGDGVSHTVPIYEGYALPHAILRLDLAGRDLTDGLMKILTEKSICHYTTAEREIVRDMKEKLAYVALDYEQELETAKRRSAVEKNYELPDGQVITIGAERFRCPQVLFQPSMIGMESAGIHETTYNSIMKCDVDIRKDLYGNIVLSGGSTMFPGIADRMSKEITALAPSSMKIKVVAPPERKYSDLWIGGSILASLSTFQQMWISKGEYDESGPSIVHRKCLLAG</sequence>
<feature type="chain" id="PRO_0000088920" description="Actin-1">
    <location>
        <begin position="1"/>
        <end position="380"/>
    </location>
</feature>
<proteinExistence type="evidence at transcript level"/>
<reference key="1">
    <citation type="journal article" date="1989" name="Plant Mol. Biol.">
        <title>Molecular evolution of two actin genes from carrot.</title>
        <authorList>
            <person name="Stranathan M."/>
            <person name="Hastings C."/>
            <person name="Trinh H."/>
            <person name="Zimmerman J.L."/>
        </authorList>
    </citation>
    <scope>NUCLEOTIDE SEQUENCE [MRNA]</scope>
</reference>
<accession>P23343</accession>
<dbReference type="EC" id="3.6.4.-" evidence="1"/>
<dbReference type="EMBL" id="X17526">
    <property type="status" value="NOT_ANNOTATED_CDS"/>
    <property type="molecule type" value="mRNA"/>
</dbReference>
<dbReference type="PIR" id="S07002">
    <property type="entry name" value="S07002"/>
</dbReference>
<dbReference type="SMR" id="P23343"/>
<dbReference type="GO" id="GO:0005737">
    <property type="term" value="C:cytoplasm"/>
    <property type="evidence" value="ECO:0007669"/>
    <property type="project" value="UniProtKB-KW"/>
</dbReference>
<dbReference type="GO" id="GO:0005856">
    <property type="term" value="C:cytoskeleton"/>
    <property type="evidence" value="ECO:0007669"/>
    <property type="project" value="UniProtKB-SubCell"/>
</dbReference>
<dbReference type="GO" id="GO:0005524">
    <property type="term" value="F:ATP binding"/>
    <property type="evidence" value="ECO:0007669"/>
    <property type="project" value="UniProtKB-KW"/>
</dbReference>
<dbReference type="GO" id="GO:0016787">
    <property type="term" value="F:hydrolase activity"/>
    <property type="evidence" value="ECO:0007669"/>
    <property type="project" value="UniProtKB-KW"/>
</dbReference>
<dbReference type="CDD" id="cd10224">
    <property type="entry name" value="ASKHA_NBD_actin"/>
    <property type="match status" value="1"/>
</dbReference>
<dbReference type="FunFam" id="3.30.420.40:FF:000291">
    <property type="entry name" value="Actin, alpha skeletal muscle"/>
    <property type="match status" value="1"/>
</dbReference>
<dbReference type="FunFam" id="3.90.640.10:FF:000001">
    <property type="entry name" value="Actin, muscle"/>
    <property type="match status" value="1"/>
</dbReference>
<dbReference type="FunFam" id="3.30.420.40:FF:000404">
    <property type="entry name" value="Major actin"/>
    <property type="match status" value="1"/>
</dbReference>
<dbReference type="FunFam" id="3.30.420.40:FF:000058">
    <property type="entry name" value="Putative actin-related protein 5"/>
    <property type="match status" value="1"/>
</dbReference>
<dbReference type="Gene3D" id="3.30.420.40">
    <property type="match status" value="2"/>
</dbReference>
<dbReference type="Gene3D" id="3.90.640.10">
    <property type="entry name" value="Actin, Chain A, domain 4"/>
    <property type="match status" value="1"/>
</dbReference>
<dbReference type="InterPro" id="IPR004000">
    <property type="entry name" value="Actin"/>
</dbReference>
<dbReference type="InterPro" id="IPR020902">
    <property type="entry name" value="Actin/actin-like_CS"/>
</dbReference>
<dbReference type="InterPro" id="IPR004001">
    <property type="entry name" value="Actin_CS"/>
</dbReference>
<dbReference type="InterPro" id="IPR043129">
    <property type="entry name" value="ATPase_NBD"/>
</dbReference>
<dbReference type="PANTHER" id="PTHR11937">
    <property type="entry name" value="ACTIN"/>
    <property type="match status" value="1"/>
</dbReference>
<dbReference type="Pfam" id="PF00022">
    <property type="entry name" value="Actin"/>
    <property type="match status" value="1"/>
</dbReference>
<dbReference type="PRINTS" id="PR00190">
    <property type="entry name" value="ACTIN"/>
</dbReference>
<dbReference type="SMART" id="SM00268">
    <property type="entry name" value="ACTIN"/>
    <property type="match status" value="1"/>
</dbReference>
<dbReference type="SUPFAM" id="SSF53067">
    <property type="entry name" value="Actin-like ATPase domain"/>
    <property type="match status" value="2"/>
</dbReference>
<dbReference type="PROSITE" id="PS00406">
    <property type="entry name" value="ACTINS_1"/>
    <property type="match status" value="1"/>
</dbReference>
<dbReference type="PROSITE" id="PS00432">
    <property type="entry name" value="ACTINS_2"/>
    <property type="match status" value="1"/>
</dbReference>
<dbReference type="PROSITE" id="PS01132">
    <property type="entry name" value="ACTINS_ACT_LIKE"/>
    <property type="match status" value="1"/>
</dbReference>
<evidence type="ECO:0000250" key="1">
    <source>
        <dbReference type="UniProtKB" id="P68137"/>
    </source>
</evidence>
<evidence type="ECO:0000305" key="2"/>
<protein>
    <recommendedName>
        <fullName>Actin-1</fullName>
        <ecNumber evidence="1">3.6.4.-</ecNumber>
    </recommendedName>
</protein>
<name>ACT1_DAUCA</name>
<keyword id="KW-0067">ATP-binding</keyword>
<keyword id="KW-0963">Cytoplasm</keyword>
<keyword id="KW-0206">Cytoskeleton</keyword>
<keyword id="KW-0378">Hydrolase</keyword>
<keyword id="KW-0547">Nucleotide-binding</keyword>